<gene>
    <name evidence="1" type="primary">recU</name>
    <name type="ordered locus">LCA_0918</name>
</gene>
<organism>
    <name type="scientific">Latilactobacillus sakei subsp. sakei (strain 23K)</name>
    <name type="common">Lactobacillus sakei subsp. sakei</name>
    <dbReference type="NCBI Taxonomy" id="314315"/>
    <lineage>
        <taxon>Bacteria</taxon>
        <taxon>Bacillati</taxon>
        <taxon>Bacillota</taxon>
        <taxon>Bacilli</taxon>
        <taxon>Lactobacillales</taxon>
        <taxon>Lactobacillaceae</taxon>
        <taxon>Latilactobacillus</taxon>
    </lineage>
</organism>
<accession>Q38X61</accession>
<dbReference type="EC" id="3.1.21.10" evidence="1"/>
<dbReference type="EMBL" id="CR936503">
    <property type="protein sequence ID" value="CAI55220.1"/>
    <property type="molecule type" value="Genomic_DNA"/>
</dbReference>
<dbReference type="RefSeq" id="WP_011374620.1">
    <property type="nucleotide sequence ID" value="NC_007576.1"/>
</dbReference>
<dbReference type="SMR" id="Q38X61"/>
<dbReference type="STRING" id="314315.LCA_0918"/>
<dbReference type="KEGG" id="lsa:LCA_0918"/>
<dbReference type="eggNOG" id="COG3331">
    <property type="taxonomic scope" value="Bacteria"/>
</dbReference>
<dbReference type="HOGENOM" id="CLU_096340_0_0_9"/>
<dbReference type="OrthoDB" id="9783592at2"/>
<dbReference type="Proteomes" id="UP000002707">
    <property type="component" value="Chromosome"/>
</dbReference>
<dbReference type="GO" id="GO:0005737">
    <property type="term" value="C:cytoplasm"/>
    <property type="evidence" value="ECO:0007669"/>
    <property type="project" value="UniProtKB-SubCell"/>
</dbReference>
<dbReference type="GO" id="GO:0004519">
    <property type="term" value="F:endonuclease activity"/>
    <property type="evidence" value="ECO:0007669"/>
    <property type="project" value="UniProtKB-UniRule"/>
</dbReference>
<dbReference type="GO" id="GO:0000287">
    <property type="term" value="F:magnesium ion binding"/>
    <property type="evidence" value="ECO:0007669"/>
    <property type="project" value="UniProtKB-UniRule"/>
</dbReference>
<dbReference type="GO" id="GO:0003676">
    <property type="term" value="F:nucleic acid binding"/>
    <property type="evidence" value="ECO:0007669"/>
    <property type="project" value="InterPro"/>
</dbReference>
<dbReference type="GO" id="GO:0007059">
    <property type="term" value="P:chromosome segregation"/>
    <property type="evidence" value="ECO:0007669"/>
    <property type="project" value="UniProtKB-UniRule"/>
</dbReference>
<dbReference type="GO" id="GO:0006310">
    <property type="term" value="P:DNA recombination"/>
    <property type="evidence" value="ECO:0007669"/>
    <property type="project" value="UniProtKB-UniRule"/>
</dbReference>
<dbReference type="GO" id="GO:0006281">
    <property type="term" value="P:DNA repair"/>
    <property type="evidence" value="ECO:0007669"/>
    <property type="project" value="UniProtKB-UniRule"/>
</dbReference>
<dbReference type="CDD" id="cd22354">
    <property type="entry name" value="RecU-like"/>
    <property type="match status" value="1"/>
</dbReference>
<dbReference type="Gene3D" id="3.40.1350.10">
    <property type="match status" value="1"/>
</dbReference>
<dbReference type="HAMAP" id="MF_00130">
    <property type="entry name" value="RecU"/>
    <property type="match status" value="1"/>
</dbReference>
<dbReference type="InterPro" id="IPR004612">
    <property type="entry name" value="Resolv_RecU"/>
</dbReference>
<dbReference type="InterPro" id="IPR011335">
    <property type="entry name" value="Restrct_endonuc-II-like"/>
</dbReference>
<dbReference type="InterPro" id="IPR011856">
    <property type="entry name" value="tRNA_endonuc-like_dom_sf"/>
</dbReference>
<dbReference type="NCBIfam" id="NF002584">
    <property type="entry name" value="PRK02234.1-5"/>
    <property type="match status" value="1"/>
</dbReference>
<dbReference type="NCBIfam" id="TIGR00648">
    <property type="entry name" value="recU"/>
    <property type="match status" value="1"/>
</dbReference>
<dbReference type="Pfam" id="PF03838">
    <property type="entry name" value="RecU"/>
    <property type="match status" value="1"/>
</dbReference>
<dbReference type="PIRSF" id="PIRSF037785">
    <property type="entry name" value="RecU"/>
    <property type="match status" value="1"/>
</dbReference>
<dbReference type="SUPFAM" id="SSF52980">
    <property type="entry name" value="Restriction endonuclease-like"/>
    <property type="match status" value="1"/>
</dbReference>
<sequence>MAFHYPNGQPYSNHETKQPKKQGRHTSPTTLYGKRGMSLEEEINDSNQYYRLRDAAVIYKKPTPIQIVKVDYPARSQAVIKEAYFKQASTTDYNGIYQGHYVDFEAKETKNKTSFPFQNFHQHQIDHFRACLQQGGVCFVIMKFVPLQRLFVYPASLLITQWDNQATGGRKSIPLAAIVADGFEIQYQLNPSIPYLEAVDQLIARHHKGV</sequence>
<name>RECU_LATSS</name>
<feature type="chain" id="PRO_1000016733" description="Holliday junction resolvase RecU">
    <location>
        <begin position="1"/>
        <end position="210"/>
    </location>
</feature>
<feature type="region of interest" description="Disordered" evidence="2">
    <location>
        <begin position="1"/>
        <end position="34"/>
    </location>
</feature>
<feature type="binding site" evidence="1">
    <location>
        <position position="90"/>
    </location>
    <ligand>
        <name>Mg(2+)</name>
        <dbReference type="ChEBI" id="CHEBI:18420"/>
    </ligand>
</feature>
<feature type="binding site" evidence="1">
    <location>
        <position position="92"/>
    </location>
    <ligand>
        <name>Mg(2+)</name>
        <dbReference type="ChEBI" id="CHEBI:18420"/>
    </ligand>
</feature>
<feature type="binding site" evidence="1">
    <location>
        <position position="105"/>
    </location>
    <ligand>
        <name>Mg(2+)</name>
        <dbReference type="ChEBI" id="CHEBI:18420"/>
    </ligand>
</feature>
<feature type="binding site" evidence="1">
    <location>
        <position position="124"/>
    </location>
    <ligand>
        <name>Mg(2+)</name>
        <dbReference type="ChEBI" id="CHEBI:18420"/>
    </ligand>
</feature>
<feature type="site" description="Transition state stabilizer" evidence="1">
    <location>
        <position position="107"/>
    </location>
</feature>
<comment type="function">
    <text evidence="1">Endonuclease that resolves Holliday junction intermediates in genetic recombination. Cleaves mobile four-strand junctions by introducing symmetrical nicks in paired strands. Promotes annealing of linear ssDNA with homologous dsDNA. Required for DNA repair, homologous recombination and chromosome segregation.</text>
</comment>
<comment type="catalytic activity">
    <reaction evidence="1">
        <text>Endonucleolytic cleavage at a junction such as a reciprocal single-stranded crossover between two homologous DNA duplexes (Holliday junction).</text>
        <dbReference type="EC" id="3.1.21.10"/>
    </reaction>
</comment>
<comment type="cofactor">
    <cofactor evidence="1">
        <name>Mg(2+)</name>
        <dbReference type="ChEBI" id="CHEBI:18420"/>
    </cofactor>
    <text evidence="1">Binds 1 Mg(2+) ion per subunit.</text>
</comment>
<comment type="subcellular location">
    <subcellularLocation>
        <location evidence="1">Cytoplasm</location>
    </subcellularLocation>
</comment>
<comment type="similarity">
    <text evidence="1">Belongs to the RecU family.</text>
</comment>
<reference key="1">
    <citation type="journal article" date="2005" name="Nat. Biotechnol.">
        <title>The complete genome sequence of the meat-borne lactic acid bacterium Lactobacillus sakei 23K.</title>
        <authorList>
            <person name="Chaillou S."/>
            <person name="Champomier-Verges M.-C."/>
            <person name="Cornet M."/>
            <person name="Crutz-Le Coq A.-M."/>
            <person name="Dudez A.-M."/>
            <person name="Martin V."/>
            <person name="Beaufils S."/>
            <person name="Darbon-Rongere E."/>
            <person name="Bossy R."/>
            <person name="Loux V."/>
            <person name="Zagorec M."/>
        </authorList>
    </citation>
    <scope>NUCLEOTIDE SEQUENCE [LARGE SCALE GENOMIC DNA]</scope>
    <source>
        <strain>23K</strain>
    </source>
</reference>
<protein>
    <recommendedName>
        <fullName evidence="1">Holliday junction resolvase RecU</fullName>
        <ecNumber evidence="1">3.1.21.10</ecNumber>
    </recommendedName>
    <alternativeName>
        <fullName evidence="1">Recombination protein U homolog</fullName>
    </alternativeName>
</protein>
<evidence type="ECO:0000255" key="1">
    <source>
        <dbReference type="HAMAP-Rule" id="MF_00130"/>
    </source>
</evidence>
<evidence type="ECO:0000256" key="2">
    <source>
        <dbReference type="SAM" id="MobiDB-lite"/>
    </source>
</evidence>
<proteinExistence type="inferred from homology"/>
<keyword id="KW-0963">Cytoplasm</keyword>
<keyword id="KW-0227">DNA damage</keyword>
<keyword id="KW-0233">DNA recombination</keyword>
<keyword id="KW-0234">DNA repair</keyword>
<keyword id="KW-0255">Endonuclease</keyword>
<keyword id="KW-0378">Hydrolase</keyword>
<keyword id="KW-0460">Magnesium</keyword>
<keyword id="KW-0479">Metal-binding</keyword>
<keyword id="KW-0540">Nuclease</keyword>
<keyword id="KW-1185">Reference proteome</keyword>